<keyword id="KW-0028">Amino-acid biosynthesis</keyword>
<keyword id="KW-0413">Isomerase</keyword>
<keyword id="KW-0486">Methionine biosynthesis</keyword>
<keyword id="KW-1185">Reference proteome</keyword>
<evidence type="ECO:0000255" key="1">
    <source>
        <dbReference type="HAMAP-Rule" id="MF_01678"/>
    </source>
</evidence>
<evidence type="ECO:0000305" key="2"/>
<accession>Q8KBH1</accession>
<proteinExistence type="inferred from homology"/>
<dbReference type="EC" id="5.3.1.23" evidence="1"/>
<dbReference type="EMBL" id="AE006470">
    <property type="protein sequence ID" value="AAM73037.1"/>
    <property type="molecule type" value="Genomic_DNA"/>
</dbReference>
<dbReference type="RefSeq" id="NP_662695.1">
    <property type="nucleotide sequence ID" value="NC_002932.3"/>
</dbReference>
<dbReference type="RefSeq" id="WP_010933476.1">
    <property type="nucleotide sequence ID" value="NC_002932.3"/>
</dbReference>
<dbReference type="SMR" id="Q8KBH1"/>
<dbReference type="STRING" id="194439.CT1816"/>
<dbReference type="EnsemblBacteria" id="AAM73037">
    <property type="protein sequence ID" value="AAM73037"/>
    <property type="gene ID" value="CT1816"/>
</dbReference>
<dbReference type="KEGG" id="cte:CT1816"/>
<dbReference type="PATRIC" id="fig|194439.7.peg.1649"/>
<dbReference type="eggNOG" id="COG0182">
    <property type="taxonomic scope" value="Bacteria"/>
</dbReference>
<dbReference type="HOGENOM" id="CLU_016218_1_2_10"/>
<dbReference type="OrthoDB" id="9803436at2"/>
<dbReference type="UniPathway" id="UPA00904">
    <property type="reaction ID" value="UER00874"/>
</dbReference>
<dbReference type="Proteomes" id="UP000001007">
    <property type="component" value="Chromosome"/>
</dbReference>
<dbReference type="GO" id="GO:0046523">
    <property type="term" value="F:S-methyl-5-thioribose-1-phosphate isomerase activity"/>
    <property type="evidence" value="ECO:0007669"/>
    <property type="project" value="UniProtKB-UniRule"/>
</dbReference>
<dbReference type="GO" id="GO:0019509">
    <property type="term" value="P:L-methionine salvage from methylthioadenosine"/>
    <property type="evidence" value="ECO:0007669"/>
    <property type="project" value="UniProtKB-UniRule"/>
</dbReference>
<dbReference type="FunFam" id="1.20.120.420:FF:000003">
    <property type="entry name" value="Methylthioribose-1-phosphate isomerase"/>
    <property type="match status" value="1"/>
</dbReference>
<dbReference type="FunFam" id="3.40.50.10470:FF:000006">
    <property type="entry name" value="Methylthioribose-1-phosphate isomerase"/>
    <property type="match status" value="1"/>
</dbReference>
<dbReference type="Gene3D" id="1.20.120.420">
    <property type="entry name" value="translation initiation factor eif-2b, domain 1"/>
    <property type="match status" value="1"/>
</dbReference>
<dbReference type="Gene3D" id="3.40.50.10470">
    <property type="entry name" value="Translation initiation factor eif-2b, domain 2"/>
    <property type="match status" value="1"/>
</dbReference>
<dbReference type="HAMAP" id="MF_01678">
    <property type="entry name" value="Salvage_MtnA"/>
    <property type="match status" value="1"/>
</dbReference>
<dbReference type="InterPro" id="IPR000649">
    <property type="entry name" value="IF-2B-related"/>
</dbReference>
<dbReference type="InterPro" id="IPR005251">
    <property type="entry name" value="IF-M1Pi"/>
</dbReference>
<dbReference type="InterPro" id="IPR042529">
    <property type="entry name" value="IF_2B-like_C"/>
</dbReference>
<dbReference type="InterPro" id="IPR011559">
    <property type="entry name" value="Initiation_fac_2B_a/b/d"/>
</dbReference>
<dbReference type="InterPro" id="IPR027363">
    <property type="entry name" value="M1Pi_N"/>
</dbReference>
<dbReference type="InterPro" id="IPR037171">
    <property type="entry name" value="NagB/RpiA_transferase-like"/>
</dbReference>
<dbReference type="NCBIfam" id="TIGR00524">
    <property type="entry name" value="eIF-2B_rel"/>
    <property type="match status" value="1"/>
</dbReference>
<dbReference type="NCBIfam" id="NF004326">
    <property type="entry name" value="PRK05720.1"/>
    <property type="match status" value="1"/>
</dbReference>
<dbReference type="NCBIfam" id="TIGR00512">
    <property type="entry name" value="salvage_mtnA"/>
    <property type="match status" value="1"/>
</dbReference>
<dbReference type="PANTHER" id="PTHR43475">
    <property type="entry name" value="METHYLTHIORIBOSE-1-PHOSPHATE ISOMERASE"/>
    <property type="match status" value="1"/>
</dbReference>
<dbReference type="PANTHER" id="PTHR43475:SF1">
    <property type="entry name" value="METHYLTHIORIBOSE-1-PHOSPHATE ISOMERASE"/>
    <property type="match status" value="1"/>
</dbReference>
<dbReference type="Pfam" id="PF01008">
    <property type="entry name" value="IF-2B"/>
    <property type="match status" value="1"/>
</dbReference>
<dbReference type="SUPFAM" id="SSF100950">
    <property type="entry name" value="NagB/RpiA/CoA transferase-like"/>
    <property type="match status" value="1"/>
</dbReference>
<reference key="1">
    <citation type="journal article" date="2002" name="Proc. Natl. Acad. Sci. U.S.A.">
        <title>The complete genome sequence of Chlorobium tepidum TLS, a photosynthetic, anaerobic, green-sulfur bacterium.</title>
        <authorList>
            <person name="Eisen J.A."/>
            <person name="Nelson K.E."/>
            <person name="Paulsen I.T."/>
            <person name="Heidelberg J.F."/>
            <person name="Wu M."/>
            <person name="Dodson R.J."/>
            <person name="DeBoy R.T."/>
            <person name="Gwinn M.L."/>
            <person name="Nelson W.C."/>
            <person name="Haft D.H."/>
            <person name="Hickey E.K."/>
            <person name="Peterson J.D."/>
            <person name="Durkin A.S."/>
            <person name="Kolonay J.F."/>
            <person name="Yang F."/>
            <person name="Holt I.E."/>
            <person name="Umayam L.A."/>
            <person name="Mason T.M."/>
            <person name="Brenner M."/>
            <person name="Shea T.P."/>
            <person name="Parksey D.S."/>
            <person name="Nierman W.C."/>
            <person name="Feldblyum T.V."/>
            <person name="Hansen C.L."/>
            <person name="Craven M.B."/>
            <person name="Radune D."/>
            <person name="Vamathevan J.J."/>
            <person name="Khouri H.M."/>
            <person name="White O."/>
            <person name="Gruber T.M."/>
            <person name="Ketchum K.A."/>
            <person name="Venter J.C."/>
            <person name="Tettelin H."/>
            <person name="Bryant D.A."/>
            <person name="Fraser C.M."/>
        </authorList>
    </citation>
    <scope>NUCLEOTIDE SEQUENCE [LARGE SCALE GENOMIC DNA]</scope>
    <source>
        <strain>ATCC 49652 / DSM 12025 / NBRC 103806 / TLS</strain>
    </source>
</reference>
<feature type="chain" id="PRO_0000357159" description="Methylthioribose-1-phosphate isomerase">
    <location>
        <begin position="1"/>
        <end position="354"/>
    </location>
</feature>
<feature type="active site" description="Proton donor" evidence="1">
    <location>
        <position position="245"/>
    </location>
</feature>
<feature type="binding site" evidence="1">
    <location>
        <begin position="45"/>
        <end position="47"/>
    </location>
    <ligand>
        <name>substrate</name>
    </ligand>
</feature>
<feature type="binding site" evidence="1">
    <location>
        <position position="87"/>
    </location>
    <ligand>
        <name>substrate</name>
    </ligand>
</feature>
<feature type="binding site" evidence="1">
    <location>
        <position position="204"/>
    </location>
    <ligand>
        <name>substrate</name>
    </ligand>
</feature>
<feature type="binding site" evidence="1">
    <location>
        <begin position="255"/>
        <end position="256"/>
    </location>
    <ligand>
        <name>substrate</name>
    </ligand>
</feature>
<feature type="site" description="Transition state stabilizer" evidence="1">
    <location>
        <position position="165"/>
    </location>
</feature>
<comment type="function">
    <text evidence="1">Catalyzes the interconversion of methylthioribose-1-phosphate (MTR-1-P) into methylthioribulose-1-phosphate (MTRu-1-P).</text>
</comment>
<comment type="catalytic activity">
    <reaction evidence="1">
        <text>5-(methylsulfanyl)-alpha-D-ribose 1-phosphate = 5-(methylsulfanyl)-D-ribulose 1-phosphate</text>
        <dbReference type="Rhea" id="RHEA:19989"/>
        <dbReference type="ChEBI" id="CHEBI:58533"/>
        <dbReference type="ChEBI" id="CHEBI:58548"/>
        <dbReference type="EC" id="5.3.1.23"/>
    </reaction>
</comment>
<comment type="pathway">
    <text evidence="1">Amino-acid biosynthesis; L-methionine biosynthesis via salvage pathway; L-methionine from S-methyl-5-thio-alpha-D-ribose 1-phosphate: step 1/6.</text>
</comment>
<comment type="similarity">
    <text evidence="2">Belongs to the eIF-2B alpha/beta/delta subunits family. MtnA subfamily.</text>
</comment>
<gene>
    <name evidence="1" type="primary">mtnA</name>
    <name type="ordered locus">CT1816</name>
</gene>
<sequence>MIDAISFKNGTFRYLDQRFLPLQEIHVETKNHQEAIEAIKTLAVRGAPLIGASAGYTVVLGINEYTGDKAGFPEYFKNLIAEVNASRPTAVNLFFATKKMQEVYDANFENDSLEALFAKMTDMAYKIHNDEIDNCDKIARHGVELLKQDFADVLKTRKLNVLTHCNTGTLACCGIGTALGVIRLAYQEGLIERVITSESRPLLQGLRLTAWELEHDGIPFASISDSSSAILMQRGMIDFAITGADRITANGDTANKIGTYAHAISARYHGLPFYIAAPVSTIDITMAEGSEIPIEERNPDELRKIFGTQVATPTTPVVNFAFDVTPGTLIRGIITEKGAVVGNYNEGLARVVNG</sequence>
<name>MTNA_CHLTE</name>
<protein>
    <recommendedName>
        <fullName evidence="1">Methylthioribose-1-phosphate isomerase</fullName>
        <shortName evidence="1">M1Pi</shortName>
        <shortName evidence="1">MTR-1-P isomerase</shortName>
        <ecNumber evidence="1">5.3.1.23</ecNumber>
    </recommendedName>
    <alternativeName>
        <fullName evidence="1">S-methyl-5-thioribose-1-phosphate isomerase</fullName>
    </alternativeName>
</protein>
<organism>
    <name type="scientific">Chlorobaculum tepidum (strain ATCC 49652 / DSM 12025 / NBRC 103806 / TLS)</name>
    <name type="common">Chlorobium tepidum</name>
    <dbReference type="NCBI Taxonomy" id="194439"/>
    <lineage>
        <taxon>Bacteria</taxon>
        <taxon>Pseudomonadati</taxon>
        <taxon>Chlorobiota</taxon>
        <taxon>Chlorobiia</taxon>
        <taxon>Chlorobiales</taxon>
        <taxon>Chlorobiaceae</taxon>
        <taxon>Chlorobaculum</taxon>
    </lineage>
</organism>